<dbReference type="EMBL" id="AB240139">
    <property type="protein sequence ID" value="BAE48034.1"/>
    <property type="molecule type" value="Genomic_DNA"/>
</dbReference>
<dbReference type="RefSeq" id="YP_398895.1">
    <property type="nucleotide sequence ID" value="NC_007602.1"/>
</dbReference>
<dbReference type="SMR" id="Q33C01"/>
<dbReference type="GeneID" id="3776358"/>
<dbReference type="KEGG" id="nto:3776358"/>
<dbReference type="OrthoDB" id="1246300at2759"/>
<dbReference type="GO" id="GO:0009535">
    <property type="term" value="C:chloroplast thylakoid membrane"/>
    <property type="evidence" value="ECO:0007669"/>
    <property type="project" value="UniProtKB-SubCell"/>
</dbReference>
<dbReference type="GO" id="GO:0045158">
    <property type="term" value="F:electron transporter, transferring electrons within cytochrome b6/f complex of photosystem II activity"/>
    <property type="evidence" value="ECO:0007669"/>
    <property type="project" value="UniProtKB-UniRule"/>
</dbReference>
<dbReference type="GO" id="GO:0045156">
    <property type="term" value="F:electron transporter, transferring electrons within the cyclic electron transport pathway of photosynthesis activity"/>
    <property type="evidence" value="ECO:0007669"/>
    <property type="project" value="InterPro"/>
</dbReference>
<dbReference type="GO" id="GO:0016491">
    <property type="term" value="F:oxidoreductase activity"/>
    <property type="evidence" value="ECO:0007669"/>
    <property type="project" value="InterPro"/>
</dbReference>
<dbReference type="GO" id="GO:0009767">
    <property type="term" value="P:photosynthetic electron transport chain"/>
    <property type="evidence" value="ECO:0007669"/>
    <property type="project" value="InterPro"/>
</dbReference>
<dbReference type="CDD" id="cd00290">
    <property type="entry name" value="cytochrome_b_C"/>
    <property type="match status" value="1"/>
</dbReference>
<dbReference type="FunFam" id="1.10.287.980:FF:000001">
    <property type="entry name" value="Cytochrome b6-f complex subunit 4"/>
    <property type="match status" value="1"/>
</dbReference>
<dbReference type="FunFam" id="1.20.5.510:FF:000002">
    <property type="entry name" value="Cytochrome b6-f complex subunit 4"/>
    <property type="match status" value="1"/>
</dbReference>
<dbReference type="Gene3D" id="1.10.287.980">
    <property type="entry name" value="plastocyanin oxidoreductase"/>
    <property type="match status" value="1"/>
</dbReference>
<dbReference type="Gene3D" id="1.20.5.510">
    <property type="entry name" value="Single helix bin"/>
    <property type="match status" value="1"/>
</dbReference>
<dbReference type="HAMAP" id="MF_01344">
    <property type="entry name" value="Cytb6_f_subIV"/>
    <property type="match status" value="1"/>
</dbReference>
<dbReference type="InterPro" id="IPR005798">
    <property type="entry name" value="Cyt_b/b6_C"/>
</dbReference>
<dbReference type="InterPro" id="IPR036150">
    <property type="entry name" value="Cyt_b/b6_C_sf"/>
</dbReference>
<dbReference type="InterPro" id="IPR005870">
    <property type="entry name" value="Cyt_b6/f_cplx_suIV"/>
</dbReference>
<dbReference type="InterPro" id="IPR048260">
    <property type="entry name" value="Cytochrome_b_C_euk/bac"/>
</dbReference>
<dbReference type="NCBIfam" id="TIGR01156">
    <property type="entry name" value="cytb6_f_IV"/>
    <property type="match status" value="1"/>
</dbReference>
<dbReference type="PANTHER" id="PTHR19271">
    <property type="entry name" value="CYTOCHROME B"/>
    <property type="match status" value="1"/>
</dbReference>
<dbReference type="PANTHER" id="PTHR19271:SF16">
    <property type="entry name" value="CYTOCHROME B"/>
    <property type="match status" value="1"/>
</dbReference>
<dbReference type="Pfam" id="PF00032">
    <property type="entry name" value="Cytochrom_B_C"/>
    <property type="match status" value="1"/>
</dbReference>
<dbReference type="PIRSF" id="PIRSF000033">
    <property type="entry name" value="B6f_17K"/>
    <property type="match status" value="1"/>
</dbReference>
<dbReference type="SUPFAM" id="SSF81648">
    <property type="entry name" value="a domain/subunit of cytochrome bc1 complex (Ubiquinol-cytochrome c reductase)"/>
    <property type="match status" value="1"/>
</dbReference>
<dbReference type="PROSITE" id="PS51003">
    <property type="entry name" value="CYTB_CTER"/>
    <property type="match status" value="1"/>
</dbReference>
<keyword id="KW-0150">Chloroplast</keyword>
<keyword id="KW-0249">Electron transport</keyword>
<keyword id="KW-0472">Membrane</keyword>
<keyword id="KW-0602">Photosynthesis</keyword>
<keyword id="KW-0934">Plastid</keyword>
<keyword id="KW-0793">Thylakoid</keyword>
<keyword id="KW-0812">Transmembrane</keyword>
<keyword id="KW-1133">Transmembrane helix</keyword>
<keyword id="KW-0813">Transport</keyword>
<protein>
    <recommendedName>
        <fullName evidence="2">Cytochrome b6-f complex subunit 4</fullName>
    </recommendedName>
    <alternativeName>
        <fullName evidence="2">17 kDa polypeptide</fullName>
    </alternativeName>
</protein>
<accession>Q33C01</accession>
<feature type="chain" id="PRO_0000061871" description="Cytochrome b6-f complex subunit 4">
    <location>
        <begin position="1"/>
        <end position="160"/>
    </location>
</feature>
<feature type="transmembrane region" description="Helical" evidence="2">
    <location>
        <begin position="36"/>
        <end position="56"/>
    </location>
</feature>
<feature type="transmembrane region" description="Helical" evidence="2">
    <location>
        <begin position="95"/>
        <end position="115"/>
    </location>
</feature>
<feature type="transmembrane region" description="Helical" evidence="2">
    <location>
        <begin position="131"/>
        <end position="151"/>
    </location>
</feature>
<organism>
    <name type="scientific">Nicotiana tomentosiformis</name>
    <name type="common">Tobacco</name>
    <dbReference type="NCBI Taxonomy" id="4098"/>
    <lineage>
        <taxon>Eukaryota</taxon>
        <taxon>Viridiplantae</taxon>
        <taxon>Streptophyta</taxon>
        <taxon>Embryophyta</taxon>
        <taxon>Tracheophyta</taxon>
        <taxon>Spermatophyta</taxon>
        <taxon>Magnoliopsida</taxon>
        <taxon>eudicotyledons</taxon>
        <taxon>Gunneridae</taxon>
        <taxon>Pentapetalae</taxon>
        <taxon>asterids</taxon>
        <taxon>lamiids</taxon>
        <taxon>Solanales</taxon>
        <taxon>Solanaceae</taxon>
        <taxon>Nicotianoideae</taxon>
        <taxon>Nicotianeae</taxon>
        <taxon>Nicotiana</taxon>
    </lineage>
</organism>
<sequence>MGVTKKPDLNDPVLRAKLAKGMGHNYYGEPAWPNDLLYIFPVVILGTIACNVGLAVLEPSMIGEPADPFATPLEILPEWYFFPVFQILRTVPNKLLGVLLMVSVPAGLLTVPFLENVNKFQNPFRRPVATTVFLIGTAVALWLGIGATLPIDKSLTLGLF</sequence>
<proteinExistence type="inferred from homology"/>
<comment type="function">
    <text evidence="2">Component of the cytochrome b6-f complex, which mediates electron transfer between photosystem II (PSII) and photosystem I (PSI), cyclic electron flow around PSI, and state transitions.</text>
</comment>
<comment type="subunit">
    <text evidence="1">The 4 large subunits of the cytochrome b6-f complex are cytochrome b6, subunit IV (17 kDa polypeptide, petD), cytochrome f and the Rieske protein, while the 4 small subunits are petG, petL, petM and petN. The complex functions as a dimer (By similarity).</text>
</comment>
<comment type="subcellular location">
    <subcellularLocation>
        <location evidence="2">Plastid</location>
        <location evidence="2">Chloroplast thylakoid membrane</location>
        <topology evidence="2">Multi-pass membrane protein</topology>
    </subcellularLocation>
</comment>
<comment type="similarity">
    <text evidence="2">Belongs to the cytochrome b family. PetD subfamily.</text>
</comment>
<evidence type="ECO:0000250" key="1"/>
<evidence type="ECO:0000255" key="2">
    <source>
        <dbReference type="HAMAP-Rule" id="MF_01344"/>
    </source>
</evidence>
<gene>
    <name evidence="2" type="primary">petD</name>
</gene>
<reference key="1">
    <citation type="journal article" date="2006" name="Mol. Genet. Genomics">
        <title>The chloroplast genome of Nicotiana sylvestris and Nicotiana tomentosiformis: complete sequencing confirms that the Nicotiana sylvestris progenitor is the maternal genome donor of Nicotiana tabacum.</title>
        <authorList>
            <person name="Yukawa M."/>
            <person name="Tsudzuki T."/>
            <person name="Sugiura M."/>
        </authorList>
    </citation>
    <scope>NUCLEOTIDE SEQUENCE [LARGE SCALE GENOMIC DNA]</scope>
</reference>
<geneLocation type="chloroplast"/>
<name>PETD_NICTO</name>